<reference key="1">
    <citation type="journal article" date="2006" name="Mol. Microbiol.">
        <title>Role of pathogenicity island-associated integrases in the genome plasticity of uropathogenic Escherichia coli strain 536.</title>
        <authorList>
            <person name="Hochhut B."/>
            <person name="Wilde C."/>
            <person name="Balling G."/>
            <person name="Middendorf B."/>
            <person name="Dobrindt U."/>
            <person name="Brzuszkiewicz E."/>
            <person name="Gottschalk G."/>
            <person name="Carniel E."/>
            <person name="Hacker J."/>
        </authorList>
    </citation>
    <scope>NUCLEOTIDE SEQUENCE [LARGE SCALE GENOMIC DNA]</scope>
    <source>
        <strain>536 / UPEC</strain>
    </source>
</reference>
<comment type="function">
    <text evidence="1">Controls the transcription of genes involved in arginine and lysine metabolism.</text>
</comment>
<comment type="subunit">
    <text evidence="1">Homodimer.</text>
</comment>
<comment type="similarity">
    <text evidence="2">Belongs to the LysR transcriptional regulatory family.</text>
</comment>
<proteinExistence type="inferred from homology"/>
<accession>Q0TDT7</accession>
<sequence length="297" mass="33472">MKRPDYRTLQALDAVIRERGFERAAQKLCITQSAVSQRIKQLENMFGQPLLVRTVPPRPTEQGQKLLALLRQVELLEEEWLGDEQTGSTPLLLSLAVNADSLATWLLPALAPVLADSPIRLNLQVEDETRTQERLRRGEVVGAVSIQHQALPSCLVDKLGALDYLFVSSKPFAEKYFPNGVTRSALLKAPVVAFDHLDDMHQAFLQQNFDLPPGSVPCHIVNSSEAFVQLARQGTTCCMIPHLQIEKELASGELIDLTPGLFQRRMLYWHRFAPESRMMRKVTDALLDYGHKVLRQD</sequence>
<protein>
    <recommendedName>
        <fullName evidence="1">HTH-type transcriptional regulator ArgP</fullName>
    </recommendedName>
</protein>
<feature type="chain" id="PRO_0000258607" description="HTH-type transcriptional regulator ArgP">
    <location>
        <begin position="1"/>
        <end position="297"/>
    </location>
</feature>
<feature type="domain" description="HTH lysR-type" evidence="1">
    <location>
        <begin position="4"/>
        <end position="60"/>
    </location>
</feature>
<feature type="DNA-binding region" description="H-T-H motif" evidence="1">
    <location>
        <begin position="21"/>
        <end position="40"/>
    </location>
</feature>
<dbReference type="EMBL" id="CP000247">
    <property type="protein sequence ID" value="ABG70892.1"/>
    <property type="molecule type" value="Genomic_DNA"/>
</dbReference>
<dbReference type="RefSeq" id="WP_000828351.1">
    <property type="nucleotide sequence ID" value="NC_008253.1"/>
</dbReference>
<dbReference type="SMR" id="Q0TDT7"/>
<dbReference type="GeneID" id="93779084"/>
<dbReference type="KEGG" id="ecp:ECP_2908"/>
<dbReference type="HOGENOM" id="CLU_063829_0_0_6"/>
<dbReference type="Proteomes" id="UP000009182">
    <property type="component" value="Chromosome"/>
</dbReference>
<dbReference type="GO" id="GO:0003677">
    <property type="term" value="F:DNA binding"/>
    <property type="evidence" value="ECO:0007669"/>
    <property type="project" value="UniProtKB-UniRule"/>
</dbReference>
<dbReference type="GO" id="GO:0003700">
    <property type="term" value="F:DNA-binding transcription factor activity"/>
    <property type="evidence" value="ECO:0007669"/>
    <property type="project" value="UniProtKB-UniRule"/>
</dbReference>
<dbReference type="CDD" id="cd08428">
    <property type="entry name" value="PBP2_IciA_ArgP"/>
    <property type="match status" value="1"/>
</dbReference>
<dbReference type="FunFam" id="1.10.10.10:FF:000061">
    <property type="entry name" value="HTH-type transcriptional regulator ArgP"/>
    <property type="match status" value="1"/>
</dbReference>
<dbReference type="FunFam" id="3.40.190.290:FF:000002">
    <property type="entry name" value="HTH-type transcriptional regulator ArgP"/>
    <property type="match status" value="1"/>
</dbReference>
<dbReference type="Gene3D" id="3.40.190.290">
    <property type="match status" value="1"/>
</dbReference>
<dbReference type="Gene3D" id="1.10.10.10">
    <property type="entry name" value="Winged helix-like DNA-binding domain superfamily/Winged helix DNA-binding domain"/>
    <property type="match status" value="1"/>
</dbReference>
<dbReference type="HAMAP" id="MF_00513">
    <property type="entry name" value="HTH_type_ArgP"/>
    <property type="match status" value="1"/>
</dbReference>
<dbReference type="InterPro" id="IPR017685">
    <property type="entry name" value="ArgP"/>
</dbReference>
<dbReference type="InterPro" id="IPR023490">
    <property type="entry name" value="ArgP_gammaproteobact"/>
</dbReference>
<dbReference type="InterPro" id="IPR050176">
    <property type="entry name" value="LTTR"/>
</dbReference>
<dbReference type="InterPro" id="IPR005119">
    <property type="entry name" value="LysR_subst-bd"/>
</dbReference>
<dbReference type="InterPro" id="IPR000847">
    <property type="entry name" value="Tscrpt_reg_HTH_LysR"/>
</dbReference>
<dbReference type="InterPro" id="IPR036388">
    <property type="entry name" value="WH-like_DNA-bd_sf"/>
</dbReference>
<dbReference type="InterPro" id="IPR036390">
    <property type="entry name" value="WH_DNA-bd_sf"/>
</dbReference>
<dbReference type="NCBIfam" id="TIGR03298">
    <property type="entry name" value="argP"/>
    <property type="match status" value="1"/>
</dbReference>
<dbReference type="NCBIfam" id="NF002964">
    <property type="entry name" value="PRK03635.1"/>
    <property type="match status" value="1"/>
</dbReference>
<dbReference type="NCBIfam" id="NF009888">
    <property type="entry name" value="PRK13348.1"/>
    <property type="match status" value="1"/>
</dbReference>
<dbReference type="PANTHER" id="PTHR30579:SF2">
    <property type="entry name" value="HTH-TYPE TRANSCRIPTIONAL REGULATOR ARGP"/>
    <property type="match status" value="1"/>
</dbReference>
<dbReference type="PANTHER" id="PTHR30579">
    <property type="entry name" value="TRANSCRIPTIONAL REGULATOR"/>
    <property type="match status" value="1"/>
</dbReference>
<dbReference type="Pfam" id="PF00126">
    <property type="entry name" value="HTH_1"/>
    <property type="match status" value="1"/>
</dbReference>
<dbReference type="Pfam" id="PF03466">
    <property type="entry name" value="LysR_substrate"/>
    <property type="match status" value="1"/>
</dbReference>
<dbReference type="PRINTS" id="PR00039">
    <property type="entry name" value="HTHLYSR"/>
</dbReference>
<dbReference type="SUPFAM" id="SSF53850">
    <property type="entry name" value="Periplasmic binding protein-like II"/>
    <property type="match status" value="1"/>
</dbReference>
<dbReference type="SUPFAM" id="SSF46785">
    <property type="entry name" value="Winged helix' DNA-binding domain"/>
    <property type="match status" value="1"/>
</dbReference>
<dbReference type="PROSITE" id="PS50931">
    <property type="entry name" value="HTH_LYSR"/>
    <property type="match status" value="1"/>
</dbReference>
<organism>
    <name type="scientific">Escherichia coli O6:K15:H31 (strain 536 / UPEC)</name>
    <dbReference type="NCBI Taxonomy" id="362663"/>
    <lineage>
        <taxon>Bacteria</taxon>
        <taxon>Pseudomonadati</taxon>
        <taxon>Pseudomonadota</taxon>
        <taxon>Gammaproteobacteria</taxon>
        <taxon>Enterobacterales</taxon>
        <taxon>Enterobacteriaceae</taxon>
        <taxon>Escherichia</taxon>
    </lineage>
</organism>
<name>ARGP_ECOL5</name>
<keyword id="KW-0238">DNA-binding</keyword>
<keyword id="KW-0804">Transcription</keyword>
<keyword id="KW-0805">Transcription regulation</keyword>
<gene>
    <name evidence="1" type="primary">argP</name>
    <name type="synonym">iciA</name>
    <name type="ordered locus">ECP_2908</name>
</gene>
<evidence type="ECO:0000255" key="1">
    <source>
        <dbReference type="HAMAP-Rule" id="MF_00513"/>
    </source>
</evidence>
<evidence type="ECO:0000305" key="2"/>